<gene>
    <name evidence="1" type="primary">rpoH</name>
    <name type="ordered locus">BU025</name>
</gene>
<evidence type="ECO:0000255" key="1">
    <source>
        <dbReference type="HAMAP-Rule" id="MF_00961"/>
    </source>
</evidence>
<dbReference type="EMBL" id="U35400">
    <property type="protein sequence ID" value="AAB51433.1"/>
    <property type="molecule type" value="Genomic_DNA"/>
</dbReference>
<dbReference type="EMBL" id="BA000003">
    <property type="protein sequence ID" value="BAB12752.1"/>
    <property type="molecule type" value="Genomic_DNA"/>
</dbReference>
<dbReference type="RefSeq" id="NP_239866.1">
    <property type="nucleotide sequence ID" value="NC_002528.1"/>
</dbReference>
<dbReference type="RefSeq" id="WP_009873986.1">
    <property type="nucleotide sequence ID" value="NZ_AP036055.1"/>
</dbReference>
<dbReference type="SMR" id="O05385"/>
<dbReference type="STRING" id="563178.BUAP5A_025"/>
<dbReference type="EnsemblBacteria" id="BAB12752">
    <property type="protein sequence ID" value="BAB12752"/>
    <property type="gene ID" value="BAB12752"/>
</dbReference>
<dbReference type="KEGG" id="buc:BU025"/>
<dbReference type="PATRIC" id="fig|107806.10.peg.37"/>
<dbReference type="eggNOG" id="COG0568">
    <property type="taxonomic scope" value="Bacteria"/>
</dbReference>
<dbReference type="HOGENOM" id="CLU_014793_3_5_6"/>
<dbReference type="Proteomes" id="UP000001806">
    <property type="component" value="Chromosome"/>
</dbReference>
<dbReference type="GO" id="GO:0005737">
    <property type="term" value="C:cytoplasm"/>
    <property type="evidence" value="ECO:0007669"/>
    <property type="project" value="UniProtKB-SubCell"/>
</dbReference>
<dbReference type="GO" id="GO:0003677">
    <property type="term" value="F:DNA binding"/>
    <property type="evidence" value="ECO:0007669"/>
    <property type="project" value="UniProtKB-UniRule"/>
</dbReference>
<dbReference type="GO" id="GO:0016987">
    <property type="term" value="F:sigma factor activity"/>
    <property type="evidence" value="ECO:0007669"/>
    <property type="project" value="UniProtKB-UniRule"/>
</dbReference>
<dbReference type="GO" id="GO:0006352">
    <property type="term" value="P:DNA-templated transcription initiation"/>
    <property type="evidence" value="ECO:0007669"/>
    <property type="project" value="UniProtKB-UniRule"/>
</dbReference>
<dbReference type="GO" id="GO:0009408">
    <property type="term" value="P:response to heat"/>
    <property type="evidence" value="ECO:0007669"/>
    <property type="project" value="UniProtKB-UniRule"/>
</dbReference>
<dbReference type="CDD" id="cd06171">
    <property type="entry name" value="Sigma70_r4"/>
    <property type="match status" value="1"/>
</dbReference>
<dbReference type="FunFam" id="1.10.10.10:FF:000285">
    <property type="entry name" value="RNA polymerase sigma factor RpoH"/>
    <property type="match status" value="1"/>
</dbReference>
<dbReference type="FunFam" id="1.20.120.1810:FF:000001">
    <property type="entry name" value="RNA polymerase sigma factor RpoH"/>
    <property type="match status" value="1"/>
</dbReference>
<dbReference type="Gene3D" id="1.20.120.1810">
    <property type="match status" value="1"/>
</dbReference>
<dbReference type="Gene3D" id="1.20.140.160">
    <property type="match status" value="1"/>
</dbReference>
<dbReference type="HAMAP" id="MF_00961">
    <property type="entry name" value="Sigma70_RpoH"/>
    <property type="match status" value="1"/>
</dbReference>
<dbReference type="InterPro" id="IPR014284">
    <property type="entry name" value="RNA_pol_sigma-70_dom"/>
</dbReference>
<dbReference type="InterPro" id="IPR000943">
    <property type="entry name" value="RNA_pol_sigma70"/>
</dbReference>
<dbReference type="InterPro" id="IPR007627">
    <property type="entry name" value="RNA_pol_sigma70_r2"/>
</dbReference>
<dbReference type="InterPro" id="IPR007630">
    <property type="entry name" value="RNA_pol_sigma70_r4"/>
</dbReference>
<dbReference type="InterPro" id="IPR013325">
    <property type="entry name" value="RNA_pol_sigma_r2"/>
</dbReference>
<dbReference type="InterPro" id="IPR013324">
    <property type="entry name" value="RNA_pol_sigma_r3/r4-like"/>
</dbReference>
<dbReference type="InterPro" id="IPR012759">
    <property type="entry name" value="RNA_pol_sigma_RpoH_proteobac"/>
</dbReference>
<dbReference type="InterPro" id="IPR050813">
    <property type="entry name" value="Sigma-70_Factor"/>
</dbReference>
<dbReference type="NCBIfam" id="NF005143">
    <property type="entry name" value="PRK06596.1"/>
    <property type="match status" value="1"/>
</dbReference>
<dbReference type="NCBIfam" id="TIGR02392">
    <property type="entry name" value="rpoH_proteo"/>
    <property type="match status" value="1"/>
</dbReference>
<dbReference type="NCBIfam" id="TIGR02937">
    <property type="entry name" value="sigma70-ECF"/>
    <property type="match status" value="1"/>
</dbReference>
<dbReference type="PANTHER" id="PTHR30376:SF3">
    <property type="entry name" value="RNA POLYMERASE SIGMA FACTOR RPOH"/>
    <property type="match status" value="1"/>
</dbReference>
<dbReference type="PANTHER" id="PTHR30376">
    <property type="entry name" value="SIGMA FACTOR RPOH HEAT SHOCK RELATED"/>
    <property type="match status" value="1"/>
</dbReference>
<dbReference type="Pfam" id="PF04542">
    <property type="entry name" value="Sigma70_r2"/>
    <property type="match status" value="1"/>
</dbReference>
<dbReference type="Pfam" id="PF04545">
    <property type="entry name" value="Sigma70_r4"/>
    <property type="match status" value="1"/>
</dbReference>
<dbReference type="PRINTS" id="PR00046">
    <property type="entry name" value="SIGMA70FCT"/>
</dbReference>
<dbReference type="SUPFAM" id="SSF88946">
    <property type="entry name" value="Sigma2 domain of RNA polymerase sigma factors"/>
    <property type="match status" value="1"/>
</dbReference>
<dbReference type="SUPFAM" id="SSF88659">
    <property type="entry name" value="Sigma3 and sigma4 domains of RNA polymerase sigma factors"/>
    <property type="match status" value="1"/>
</dbReference>
<dbReference type="PROSITE" id="PS00715">
    <property type="entry name" value="SIGMA70_1"/>
    <property type="match status" value="1"/>
</dbReference>
<dbReference type="PROSITE" id="PS00716">
    <property type="entry name" value="SIGMA70_2"/>
    <property type="match status" value="1"/>
</dbReference>
<accession>O05385</accession>
<sequence length="284" mass="32937">MINKVQILSVTPPGNLDAYIRIANLWPMLSIEEEKKLTKRLRYNGDLDAAKTLILSHLRFVIHISRNYSGYGLLQSDLIQEGNIGLMKAVRRFNPEIGVRLVSFAVHWIKSEIHEYVLRNWRIVKVATTKSQRKLFFNLRKTKKRLGWFNEEEIQIVARELGVSSRDVREMESRMSAQDVAFNPSPEEHCDSKTNSSIQYLQDKTSNFANGVEQDNWEEHAANKLSSALLRLDERSRHIIHARWLDKNKKNTLQNIANNYGISAERVRQLEKNAMKKLKLAIEA</sequence>
<name>RPOH_BUCAI</name>
<organism>
    <name type="scientific">Buchnera aphidicola subsp. Acyrthosiphon pisum (strain APS)</name>
    <name type="common">Acyrthosiphon pisum symbiotic bacterium</name>
    <dbReference type="NCBI Taxonomy" id="107806"/>
    <lineage>
        <taxon>Bacteria</taxon>
        <taxon>Pseudomonadati</taxon>
        <taxon>Pseudomonadota</taxon>
        <taxon>Gammaproteobacteria</taxon>
        <taxon>Enterobacterales</taxon>
        <taxon>Erwiniaceae</taxon>
        <taxon>Buchnera</taxon>
    </lineage>
</organism>
<keyword id="KW-0963">Cytoplasm</keyword>
<keyword id="KW-0238">DNA-binding</keyword>
<keyword id="KW-1185">Reference proteome</keyword>
<keyword id="KW-0731">Sigma factor</keyword>
<keyword id="KW-0346">Stress response</keyword>
<keyword id="KW-0804">Transcription</keyword>
<keyword id="KW-0805">Transcription regulation</keyword>
<protein>
    <recommendedName>
        <fullName evidence="1">RNA polymerase sigma factor RpoH</fullName>
    </recommendedName>
    <alternativeName>
        <fullName evidence="1">RNA polymerase sigma-32 factor</fullName>
    </alternativeName>
</protein>
<comment type="function">
    <text evidence="1">Sigma factors are initiation factors that promote the attachment of RNA polymerase to specific initiation sites and are then released. This sigma factor is involved in regulation of expression of heat shock genes.</text>
</comment>
<comment type="subunit">
    <text evidence="1">Interacts with the RNA polymerase core enzyme.</text>
</comment>
<comment type="subcellular location">
    <subcellularLocation>
        <location evidence="1">Cytoplasm</location>
    </subcellularLocation>
</comment>
<comment type="similarity">
    <text evidence="1">Belongs to the sigma-70 factor family. RpoH subfamily.</text>
</comment>
<proteinExistence type="inferred from homology"/>
<reference key="1">
    <citation type="journal article" date="1997" name="J. Bacteriol.">
        <title>Expression and control of an operon from an intracellular symbiont which is homologous to the groE operon.</title>
        <authorList>
            <person name="Sato S."/>
            <person name="Ishikawa H."/>
        </authorList>
    </citation>
    <scope>NUCLEOTIDE SEQUENCE [GENOMIC DNA]</scope>
</reference>
<reference key="2">
    <citation type="journal article" date="2000" name="Nature">
        <title>Genome sequence of the endocellular bacterial symbiont of aphids Buchnera sp. APS.</title>
        <authorList>
            <person name="Shigenobu S."/>
            <person name="Watanabe H."/>
            <person name="Hattori M."/>
            <person name="Sakaki Y."/>
            <person name="Ishikawa H."/>
        </authorList>
    </citation>
    <scope>NUCLEOTIDE SEQUENCE [LARGE SCALE GENOMIC DNA]</scope>
    <source>
        <strain>APS</strain>
    </source>
</reference>
<feature type="chain" id="PRO_0000093951" description="RNA polymerase sigma factor RpoH">
    <location>
        <begin position="1"/>
        <end position="284"/>
    </location>
</feature>
<feature type="DNA-binding region" description="H-T-H motif" evidence="1">
    <location>
        <begin position="253"/>
        <end position="272"/>
    </location>
</feature>
<feature type="region of interest" description="Sigma-70 factor domain-2" evidence="1">
    <location>
        <begin position="53"/>
        <end position="122"/>
    </location>
</feature>
<feature type="region of interest" description="Sigma-70 factor domain-4" evidence="1">
    <location>
        <begin position="228"/>
        <end position="280"/>
    </location>
</feature>
<feature type="short sequence motif" description="Interaction with polymerase core subunit RpoC">
    <location>
        <begin position="77"/>
        <end position="80"/>
    </location>
</feature>